<accession>Q9GLQ2</accession>
<comment type="function">
    <text>Protamines substitute for histones in the chromatin of sperm during the haploid phase of spermatogenesis. They compact sperm DNA into a highly condensed, stable and inactive complex.</text>
</comment>
<comment type="subcellular location">
    <subcellularLocation>
        <location>Nucleus</location>
    </subcellularLocation>
    <subcellularLocation>
        <location>Chromosome</location>
    </subcellularLocation>
</comment>
<comment type="tissue specificity">
    <text>Testis.</text>
</comment>
<comment type="similarity">
    <text evidence="2">Belongs to the protamine P1 family.</text>
</comment>
<name>HSP1_LAGHI</name>
<protein>
    <recommendedName>
        <fullName>Sperm protamine P1</fullName>
    </recommendedName>
</protein>
<dbReference type="EMBL" id="AF187544">
    <property type="protein sequence ID" value="AAG27961.1"/>
    <property type="molecule type" value="Genomic_DNA"/>
</dbReference>
<dbReference type="GO" id="GO:0000786">
    <property type="term" value="C:nucleosome"/>
    <property type="evidence" value="ECO:0007669"/>
    <property type="project" value="UniProtKB-KW"/>
</dbReference>
<dbReference type="GO" id="GO:0005634">
    <property type="term" value="C:nucleus"/>
    <property type="evidence" value="ECO:0007669"/>
    <property type="project" value="UniProtKB-SubCell"/>
</dbReference>
<dbReference type="GO" id="GO:0003677">
    <property type="term" value="F:DNA binding"/>
    <property type="evidence" value="ECO:0007669"/>
    <property type="project" value="UniProtKB-KW"/>
</dbReference>
<dbReference type="GO" id="GO:0030261">
    <property type="term" value="P:chromosome condensation"/>
    <property type="evidence" value="ECO:0007669"/>
    <property type="project" value="UniProtKB-KW"/>
</dbReference>
<dbReference type="GO" id="GO:0035092">
    <property type="term" value="P:sperm DNA condensation"/>
    <property type="evidence" value="ECO:0007669"/>
    <property type="project" value="InterPro"/>
</dbReference>
<dbReference type="InterPro" id="IPR000221">
    <property type="entry name" value="Protamine_P1"/>
</dbReference>
<dbReference type="PROSITE" id="PS00048">
    <property type="entry name" value="PROTAMINE_P1"/>
    <property type="match status" value="1"/>
</dbReference>
<gene>
    <name type="primary">PRM1</name>
</gene>
<organism>
    <name type="scientific">Lagorchestes hirsutus</name>
    <name type="common">Rufous hare-wallaby</name>
    <name type="synonym">Western hare-wallaby</name>
    <dbReference type="NCBI Taxonomy" id="65632"/>
    <lineage>
        <taxon>Eukaryota</taxon>
        <taxon>Metazoa</taxon>
        <taxon>Chordata</taxon>
        <taxon>Craniata</taxon>
        <taxon>Vertebrata</taxon>
        <taxon>Euteleostomi</taxon>
        <taxon>Mammalia</taxon>
        <taxon>Metatheria</taxon>
        <taxon>Diprotodontia</taxon>
        <taxon>Macropodidae</taxon>
        <taxon>Lagorchestes</taxon>
    </lineage>
</organism>
<sequence length="65" mass="9052">MARYRHSRSRSRSGYRRQRRRRSRYRSRRRRYRRRQRRSRRGRRRGYSRRRYSRRRYSRRRRRRY</sequence>
<evidence type="ECO:0000256" key="1">
    <source>
        <dbReference type="SAM" id="MobiDB-lite"/>
    </source>
</evidence>
<evidence type="ECO:0000305" key="2"/>
<proteinExistence type="evidence at transcript level"/>
<keyword id="KW-0158">Chromosome</keyword>
<keyword id="KW-0217">Developmental protein</keyword>
<keyword id="KW-0221">Differentiation</keyword>
<keyword id="KW-0226">DNA condensation</keyword>
<keyword id="KW-0238">DNA-binding</keyword>
<keyword id="KW-0544">Nucleosome core</keyword>
<keyword id="KW-0539">Nucleus</keyword>
<keyword id="KW-0744">Spermatogenesis</keyword>
<reference key="1">
    <citation type="journal article" date="2000" name="J. Mammal. Evol.">
        <title>Intergeneric relationships among Macropodoidea (Metatheria: Diprotodontia) and the chronicle of kangaroo evolution.</title>
        <authorList>
            <person name="Burk A."/>
            <person name="Springer M.S."/>
        </authorList>
    </citation>
    <scope>NUCLEOTIDE SEQUENCE [GENOMIC DNA]</scope>
</reference>
<feature type="chain" id="PRO_0000191487" description="Sperm protamine P1">
    <location>
        <begin position="1"/>
        <end position="65"/>
    </location>
</feature>
<feature type="region of interest" description="Disordered" evidence="1">
    <location>
        <begin position="1"/>
        <end position="65"/>
    </location>
</feature>